<sequence length="337" mass="34182">MNDLKSIIGKVATGAPLSREEAASAFDSMMSGEATPSQMGALLMALRVRGETVEEITGAVSVMRAKMLRVDAPAGAVDIVGTGGDGSGSVNVSTCAAFIVAGAGIPVAKHGNRALSSRSGAADVLAALGVKIDLKPDQVGRCVQEAGIGFMFAPAHHPAMKNVGPTRVELATRTIFNLLGPLSNPAGVKHQMVGVFSRQWVEPLAQVLKNLGSKAAWVVHGSDGLDEITLTGPTFVAALEHGQIRTFEVTPEQAGLGLCGSDGLKGGDAAANAVALQSVLDGMPSPYRDVALLNAAAALVVAGRAKTLAEGVAIGRDALDSGAAAARLKHLIAVSNS</sequence>
<comment type="function">
    <text evidence="1">Catalyzes the transfer of the phosphoribosyl group of 5-phosphorylribose-1-pyrophosphate (PRPP) to anthranilate to yield N-(5'-phosphoribosyl)-anthranilate (PRA).</text>
</comment>
<comment type="catalytic activity">
    <reaction evidence="1">
        <text>N-(5-phospho-beta-D-ribosyl)anthranilate + diphosphate = 5-phospho-alpha-D-ribose 1-diphosphate + anthranilate</text>
        <dbReference type="Rhea" id="RHEA:11768"/>
        <dbReference type="ChEBI" id="CHEBI:16567"/>
        <dbReference type="ChEBI" id="CHEBI:18277"/>
        <dbReference type="ChEBI" id="CHEBI:33019"/>
        <dbReference type="ChEBI" id="CHEBI:58017"/>
        <dbReference type="EC" id="2.4.2.18"/>
    </reaction>
</comment>
<comment type="cofactor">
    <cofactor evidence="1">
        <name>Mg(2+)</name>
        <dbReference type="ChEBI" id="CHEBI:18420"/>
    </cofactor>
    <text evidence="1">Binds 2 magnesium ions per monomer.</text>
</comment>
<comment type="pathway">
    <text evidence="1">Amino-acid biosynthesis; L-tryptophan biosynthesis; L-tryptophan from chorismate: step 2/5.</text>
</comment>
<comment type="subunit">
    <text evidence="1">Homodimer.</text>
</comment>
<comment type="similarity">
    <text evidence="1">Belongs to the anthranilate phosphoribosyltransferase family.</text>
</comment>
<protein>
    <recommendedName>
        <fullName evidence="1">Anthranilate phosphoribosyltransferase</fullName>
        <ecNumber evidence="1">2.4.2.18</ecNumber>
    </recommendedName>
</protein>
<gene>
    <name evidence="1" type="primary">trpD</name>
    <name type="ordered locus">BBta_4482</name>
</gene>
<evidence type="ECO:0000255" key="1">
    <source>
        <dbReference type="HAMAP-Rule" id="MF_00211"/>
    </source>
</evidence>
<keyword id="KW-0028">Amino-acid biosynthesis</keyword>
<keyword id="KW-0057">Aromatic amino acid biosynthesis</keyword>
<keyword id="KW-0328">Glycosyltransferase</keyword>
<keyword id="KW-0460">Magnesium</keyword>
<keyword id="KW-0479">Metal-binding</keyword>
<keyword id="KW-1185">Reference proteome</keyword>
<keyword id="KW-0808">Transferase</keyword>
<keyword id="KW-0822">Tryptophan biosynthesis</keyword>
<organism>
    <name type="scientific">Bradyrhizobium sp. (strain BTAi1 / ATCC BAA-1182)</name>
    <dbReference type="NCBI Taxonomy" id="288000"/>
    <lineage>
        <taxon>Bacteria</taxon>
        <taxon>Pseudomonadati</taxon>
        <taxon>Pseudomonadota</taxon>
        <taxon>Alphaproteobacteria</taxon>
        <taxon>Hyphomicrobiales</taxon>
        <taxon>Nitrobacteraceae</taxon>
        <taxon>Bradyrhizobium</taxon>
    </lineage>
</organism>
<accession>A5EK24</accession>
<reference key="1">
    <citation type="journal article" date="2007" name="Science">
        <title>Legumes symbioses: absence of nod genes in photosynthetic bradyrhizobia.</title>
        <authorList>
            <person name="Giraud E."/>
            <person name="Moulin L."/>
            <person name="Vallenet D."/>
            <person name="Barbe V."/>
            <person name="Cytryn E."/>
            <person name="Avarre J.-C."/>
            <person name="Jaubert M."/>
            <person name="Simon D."/>
            <person name="Cartieaux F."/>
            <person name="Prin Y."/>
            <person name="Bena G."/>
            <person name="Hannibal L."/>
            <person name="Fardoux J."/>
            <person name="Kojadinovic M."/>
            <person name="Vuillet L."/>
            <person name="Lajus A."/>
            <person name="Cruveiller S."/>
            <person name="Rouy Z."/>
            <person name="Mangenot S."/>
            <person name="Segurens B."/>
            <person name="Dossat C."/>
            <person name="Franck W.L."/>
            <person name="Chang W.-S."/>
            <person name="Saunders E."/>
            <person name="Bruce D."/>
            <person name="Richardson P."/>
            <person name="Normand P."/>
            <person name="Dreyfus B."/>
            <person name="Pignol D."/>
            <person name="Stacey G."/>
            <person name="Emerich D."/>
            <person name="Vermeglio A."/>
            <person name="Medigue C."/>
            <person name="Sadowsky M."/>
        </authorList>
    </citation>
    <scope>NUCLEOTIDE SEQUENCE [LARGE SCALE GENOMIC DNA]</scope>
    <source>
        <strain>BTAi1 / ATCC BAA-1182</strain>
    </source>
</reference>
<feature type="chain" id="PRO_1000042994" description="Anthranilate phosphoribosyltransferase">
    <location>
        <begin position="1"/>
        <end position="337"/>
    </location>
</feature>
<feature type="binding site" evidence="1">
    <location>
        <position position="81"/>
    </location>
    <ligand>
        <name>5-phospho-alpha-D-ribose 1-diphosphate</name>
        <dbReference type="ChEBI" id="CHEBI:58017"/>
    </ligand>
</feature>
<feature type="binding site" evidence="1">
    <location>
        <position position="81"/>
    </location>
    <ligand>
        <name>anthranilate</name>
        <dbReference type="ChEBI" id="CHEBI:16567"/>
        <label>1</label>
    </ligand>
</feature>
<feature type="binding site" evidence="1">
    <location>
        <begin position="84"/>
        <end position="85"/>
    </location>
    <ligand>
        <name>5-phospho-alpha-D-ribose 1-diphosphate</name>
        <dbReference type="ChEBI" id="CHEBI:58017"/>
    </ligand>
</feature>
<feature type="binding site" evidence="1">
    <location>
        <position position="89"/>
    </location>
    <ligand>
        <name>5-phospho-alpha-D-ribose 1-diphosphate</name>
        <dbReference type="ChEBI" id="CHEBI:58017"/>
    </ligand>
</feature>
<feature type="binding site" evidence="1">
    <location>
        <begin position="91"/>
        <end position="94"/>
    </location>
    <ligand>
        <name>5-phospho-alpha-D-ribose 1-diphosphate</name>
        <dbReference type="ChEBI" id="CHEBI:58017"/>
    </ligand>
</feature>
<feature type="binding site" evidence="1">
    <location>
        <position position="93"/>
    </location>
    <ligand>
        <name>Mg(2+)</name>
        <dbReference type="ChEBI" id="CHEBI:18420"/>
        <label>1</label>
    </ligand>
</feature>
<feature type="binding site" evidence="1">
    <location>
        <begin position="109"/>
        <end position="117"/>
    </location>
    <ligand>
        <name>5-phospho-alpha-D-ribose 1-diphosphate</name>
        <dbReference type="ChEBI" id="CHEBI:58017"/>
    </ligand>
</feature>
<feature type="binding site" evidence="1">
    <location>
        <position position="112"/>
    </location>
    <ligand>
        <name>anthranilate</name>
        <dbReference type="ChEBI" id="CHEBI:16567"/>
        <label>1</label>
    </ligand>
</feature>
<feature type="binding site" evidence="1">
    <location>
        <position position="121"/>
    </location>
    <ligand>
        <name>5-phospho-alpha-D-ribose 1-diphosphate</name>
        <dbReference type="ChEBI" id="CHEBI:58017"/>
    </ligand>
</feature>
<feature type="binding site" evidence="1">
    <location>
        <position position="167"/>
    </location>
    <ligand>
        <name>anthranilate</name>
        <dbReference type="ChEBI" id="CHEBI:16567"/>
        <label>2</label>
    </ligand>
</feature>
<feature type="binding site" evidence="1">
    <location>
        <position position="226"/>
    </location>
    <ligand>
        <name>Mg(2+)</name>
        <dbReference type="ChEBI" id="CHEBI:18420"/>
        <label>2</label>
    </ligand>
</feature>
<feature type="binding site" evidence="1">
    <location>
        <position position="227"/>
    </location>
    <ligand>
        <name>Mg(2+)</name>
        <dbReference type="ChEBI" id="CHEBI:18420"/>
        <label>1</label>
    </ligand>
</feature>
<feature type="binding site" evidence="1">
    <location>
        <position position="227"/>
    </location>
    <ligand>
        <name>Mg(2+)</name>
        <dbReference type="ChEBI" id="CHEBI:18420"/>
        <label>2</label>
    </ligand>
</feature>
<name>TRPD_BRASB</name>
<proteinExistence type="inferred from homology"/>
<dbReference type="EC" id="2.4.2.18" evidence="1"/>
<dbReference type="EMBL" id="CP000494">
    <property type="protein sequence ID" value="ABQ36518.1"/>
    <property type="molecule type" value="Genomic_DNA"/>
</dbReference>
<dbReference type="RefSeq" id="WP_012044514.1">
    <property type="nucleotide sequence ID" value="NC_009485.1"/>
</dbReference>
<dbReference type="SMR" id="A5EK24"/>
<dbReference type="STRING" id="288000.BBta_4482"/>
<dbReference type="KEGG" id="bbt:BBta_4482"/>
<dbReference type="eggNOG" id="COG0547">
    <property type="taxonomic scope" value="Bacteria"/>
</dbReference>
<dbReference type="HOGENOM" id="CLU_034315_2_1_5"/>
<dbReference type="OrthoDB" id="9806430at2"/>
<dbReference type="UniPathway" id="UPA00035">
    <property type="reaction ID" value="UER00041"/>
</dbReference>
<dbReference type="Proteomes" id="UP000000246">
    <property type="component" value="Chromosome"/>
</dbReference>
<dbReference type="GO" id="GO:0005829">
    <property type="term" value="C:cytosol"/>
    <property type="evidence" value="ECO:0007669"/>
    <property type="project" value="TreeGrafter"/>
</dbReference>
<dbReference type="GO" id="GO:0004048">
    <property type="term" value="F:anthranilate phosphoribosyltransferase activity"/>
    <property type="evidence" value="ECO:0007669"/>
    <property type="project" value="UniProtKB-UniRule"/>
</dbReference>
<dbReference type="GO" id="GO:0000287">
    <property type="term" value="F:magnesium ion binding"/>
    <property type="evidence" value="ECO:0007669"/>
    <property type="project" value="UniProtKB-UniRule"/>
</dbReference>
<dbReference type="GO" id="GO:0000162">
    <property type="term" value="P:L-tryptophan biosynthetic process"/>
    <property type="evidence" value="ECO:0007669"/>
    <property type="project" value="UniProtKB-UniRule"/>
</dbReference>
<dbReference type="FunFam" id="3.40.1030.10:FF:000002">
    <property type="entry name" value="Anthranilate phosphoribosyltransferase"/>
    <property type="match status" value="1"/>
</dbReference>
<dbReference type="Gene3D" id="3.40.1030.10">
    <property type="entry name" value="Nucleoside phosphorylase/phosphoribosyltransferase catalytic domain"/>
    <property type="match status" value="1"/>
</dbReference>
<dbReference type="Gene3D" id="1.20.970.10">
    <property type="entry name" value="Transferase, Pyrimidine Nucleoside Phosphorylase, Chain C"/>
    <property type="match status" value="1"/>
</dbReference>
<dbReference type="HAMAP" id="MF_00211">
    <property type="entry name" value="TrpD"/>
    <property type="match status" value="1"/>
</dbReference>
<dbReference type="InterPro" id="IPR005940">
    <property type="entry name" value="Anthranilate_Pribosyl_Tfrase"/>
</dbReference>
<dbReference type="InterPro" id="IPR000312">
    <property type="entry name" value="Glycosyl_Trfase_fam3"/>
</dbReference>
<dbReference type="InterPro" id="IPR017459">
    <property type="entry name" value="Glycosyl_Trfase_fam3_N_dom"/>
</dbReference>
<dbReference type="InterPro" id="IPR036320">
    <property type="entry name" value="Glycosyl_Trfase_fam3_N_dom_sf"/>
</dbReference>
<dbReference type="InterPro" id="IPR035902">
    <property type="entry name" value="Nuc_phospho_transferase"/>
</dbReference>
<dbReference type="NCBIfam" id="TIGR01245">
    <property type="entry name" value="trpD"/>
    <property type="match status" value="1"/>
</dbReference>
<dbReference type="PANTHER" id="PTHR43285">
    <property type="entry name" value="ANTHRANILATE PHOSPHORIBOSYLTRANSFERASE"/>
    <property type="match status" value="1"/>
</dbReference>
<dbReference type="PANTHER" id="PTHR43285:SF2">
    <property type="entry name" value="ANTHRANILATE PHOSPHORIBOSYLTRANSFERASE"/>
    <property type="match status" value="1"/>
</dbReference>
<dbReference type="Pfam" id="PF02885">
    <property type="entry name" value="Glycos_trans_3N"/>
    <property type="match status" value="1"/>
</dbReference>
<dbReference type="Pfam" id="PF00591">
    <property type="entry name" value="Glycos_transf_3"/>
    <property type="match status" value="1"/>
</dbReference>
<dbReference type="SUPFAM" id="SSF52418">
    <property type="entry name" value="Nucleoside phosphorylase/phosphoribosyltransferase catalytic domain"/>
    <property type="match status" value="1"/>
</dbReference>
<dbReference type="SUPFAM" id="SSF47648">
    <property type="entry name" value="Nucleoside phosphorylase/phosphoribosyltransferase N-terminal domain"/>
    <property type="match status" value="1"/>
</dbReference>